<dbReference type="EMBL" id="BC082098">
    <property type="protein sequence ID" value="AAH82098.1"/>
    <property type="molecule type" value="mRNA"/>
</dbReference>
<dbReference type="RefSeq" id="NP_001005548.1">
    <property type="nucleotide sequence ID" value="NM_001005548.1"/>
</dbReference>
<dbReference type="SMR" id="Q641X2"/>
<dbReference type="FunCoup" id="Q641X2">
    <property type="interactions" value="2049"/>
</dbReference>
<dbReference type="STRING" id="10116.ENSRNOP00000013510"/>
<dbReference type="GlyGen" id="Q641X2">
    <property type="glycosylation" value="1 site"/>
</dbReference>
<dbReference type="iPTMnet" id="Q641X2"/>
<dbReference type="PhosphoSitePlus" id="Q641X2"/>
<dbReference type="jPOST" id="Q641X2"/>
<dbReference type="PaxDb" id="10116-ENSRNOP00000013510"/>
<dbReference type="Ensembl" id="ENSRNOT00000013512.7">
    <property type="protein sequence ID" value="ENSRNOP00000013510.4"/>
    <property type="gene ID" value="ENSRNOG00000010116.7"/>
</dbReference>
<dbReference type="GeneID" id="300837"/>
<dbReference type="KEGG" id="rno:300837"/>
<dbReference type="UCSC" id="RGD:1549772">
    <property type="organism name" value="rat"/>
</dbReference>
<dbReference type="AGR" id="RGD:1549772"/>
<dbReference type="CTD" id="123169"/>
<dbReference type="RGD" id="1549772">
    <property type="gene designation" value="Leo1"/>
</dbReference>
<dbReference type="eggNOG" id="KOG1181">
    <property type="taxonomic scope" value="Eukaryota"/>
</dbReference>
<dbReference type="eggNOG" id="KOG2428">
    <property type="taxonomic scope" value="Eukaryota"/>
</dbReference>
<dbReference type="GeneTree" id="ENSGT00550000074952"/>
<dbReference type="HOGENOM" id="CLU_021818_1_0_1"/>
<dbReference type="InParanoid" id="Q641X2"/>
<dbReference type="OMA" id="RSDRSMH"/>
<dbReference type="OrthoDB" id="20844at2759"/>
<dbReference type="PhylomeDB" id="Q641X2"/>
<dbReference type="TreeFam" id="TF321961"/>
<dbReference type="Reactome" id="R-RNO-112382">
    <property type="pathway name" value="Formation of RNA Pol II elongation complex"/>
</dbReference>
<dbReference type="Reactome" id="R-RNO-201722">
    <property type="pathway name" value="Formation of the beta-catenin:TCF transactivating complex"/>
</dbReference>
<dbReference type="Reactome" id="R-RNO-674695">
    <property type="pathway name" value="RNA Polymerase II Pre-transcription Events"/>
</dbReference>
<dbReference type="Reactome" id="R-RNO-75955">
    <property type="pathway name" value="RNA Polymerase II Transcription Elongation"/>
</dbReference>
<dbReference type="Reactome" id="R-RNO-8866654">
    <property type="pathway name" value="E3 ubiquitin ligases ubiquitinate target proteins"/>
</dbReference>
<dbReference type="PRO" id="PR:Q641X2"/>
<dbReference type="Proteomes" id="UP000002494">
    <property type="component" value="Chromosome 8"/>
</dbReference>
<dbReference type="Bgee" id="ENSRNOG00000010116">
    <property type="expression patterns" value="Expressed in cerebellum and 20 other cell types or tissues"/>
</dbReference>
<dbReference type="GO" id="GO:0016593">
    <property type="term" value="C:Cdc73/Paf1 complex"/>
    <property type="evidence" value="ECO:0000250"/>
    <property type="project" value="UniProtKB"/>
</dbReference>
<dbReference type="GO" id="GO:0005634">
    <property type="term" value="C:nucleus"/>
    <property type="evidence" value="ECO:0000318"/>
    <property type="project" value="GO_Central"/>
</dbReference>
<dbReference type="GO" id="GO:1990269">
    <property type="term" value="F:RNA polymerase II C-terminal domain phosphoserine binding"/>
    <property type="evidence" value="ECO:0000318"/>
    <property type="project" value="GO_Central"/>
</dbReference>
<dbReference type="GO" id="GO:0001711">
    <property type="term" value="P:endodermal cell fate commitment"/>
    <property type="evidence" value="ECO:0000250"/>
    <property type="project" value="UniProtKB"/>
</dbReference>
<dbReference type="GO" id="GO:0031124">
    <property type="term" value="P:mRNA 3'-end processing"/>
    <property type="evidence" value="ECO:0000250"/>
    <property type="project" value="UniProtKB"/>
</dbReference>
<dbReference type="GO" id="GO:0045638">
    <property type="term" value="P:negative regulation of myeloid cell differentiation"/>
    <property type="evidence" value="ECO:0000250"/>
    <property type="project" value="UniProtKB"/>
</dbReference>
<dbReference type="GO" id="GO:0045944">
    <property type="term" value="P:positive regulation of transcription by RNA polymerase II"/>
    <property type="evidence" value="ECO:0000266"/>
    <property type="project" value="RGD"/>
</dbReference>
<dbReference type="GO" id="GO:0032968">
    <property type="term" value="P:positive regulation of transcription elongation by RNA polymerase II"/>
    <property type="evidence" value="ECO:0000318"/>
    <property type="project" value="GO_Central"/>
</dbReference>
<dbReference type="GO" id="GO:0019827">
    <property type="term" value="P:stem cell population maintenance"/>
    <property type="evidence" value="ECO:0000250"/>
    <property type="project" value="UniProtKB"/>
</dbReference>
<dbReference type="GO" id="GO:0006368">
    <property type="term" value="P:transcription elongation by RNA polymerase II"/>
    <property type="evidence" value="ECO:0000250"/>
    <property type="project" value="UniProtKB"/>
</dbReference>
<dbReference type="GO" id="GO:0016055">
    <property type="term" value="P:Wnt signaling pathway"/>
    <property type="evidence" value="ECO:0007669"/>
    <property type="project" value="UniProtKB-KW"/>
</dbReference>
<dbReference type="InterPro" id="IPR007149">
    <property type="entry name" value="Leo1"/>
</dbReference>
<dbReference type="PANTHER" id="PTHR23146">
    <property type="entry name" value="LEO1 PROTEIN"/>
    <property type="match status" value="1"/>
</dbReference>
<dbReference type="PANTHER" id="PTHR23146:SF0">
    <property type="entry name" value="RNA POLYMERASE-ASSOCIATED PROTEIN LEO1"/>
    <property type="match status" value="1"/>
</dbReference>
<dbReference type="Pfam" id="PF04004">
    <property type="entry name" value="Leo1"/>
    <property type="match status" value="1"/>
</dbReference>
<protein>
    <recommendedName>
        <fullName>RNA polymerase-associated protein LEO1</fullName>
    </recommendedName>
</protein>
<keyword id="KW-0007">Acetylation</keyword>
<keyword id="KW-0010">Activator</keyword>
<keyword id="KW-0539">Nucleus</keyword>
<keyword id="KW-0597">Phosphoprotein</keyword>
<keyword id="KW-1185">Reference proteome</keyword>
<keyword id="KW-0804">Transcription</keyword>
<keyword id="KW-0805">Transcription regulation</keyword>
<keyword id="KW-0879">Wnt signaling pathway</keyword>
<name>LEO1_RAT</name>
<comment type="function">
    <text evidence="1">Component of the PAF1 complex (PAF1C) which has multiple functions during transcription by RNA polymerase II and is implicated in regulation of development and maintenance of embryonic stem cell pluripotency. PAF1C associates with RNA polymerase II through interaction with POLR2A CTD non-phosphorylated and 'Ser-2'- and 'Ser-5'-phosphorylated forms and is involved in transcriptional elongation, acting both independently and synergistically with TCEA1 and in cooperation with the DSIF complex and HTATSF1. PAF1C is required for transcription of Hox and Wnt target genes. PAF1C is involved in hematopoiesis and stimulates transcriptional activity of KMT2A/MLL1. PAF1C is involved in histone modifications such as ubiquitination of histone H2B and methylation on histone H3 'Lys-4' (H3K4me3). PAF1C recruits the RNF20/40 E3 ubiquitin-protein ligase complex and the E2 enzyme UBE2A or UBE2B to chromatin which mediate monoubiquitination of 'Lys-120' of histone H2B (H2BK120ub1); UB2A/B-mediated H2B ubiquitination is proposed to be coupled to transcription. PAF1C is involved in mRNA 3' end formation probably through association with cleavage and poly(A) factors. Involved in polyadenylation of mRNA precursors. Connects PAF1C to Wnt signaling (By similarity).</text>
</comment>
<comment type="subunit">
    <text evidence="2 3">Component of the PAF1 complex, which consists of CDC73, PAF1, LEO1, CTR9, RTF1 and SKIC8 (By similarity). The PAF1 complex interacts with PHF5A (By similarity). Interacts with TCEA1, SUPT5H and CTNNB1 (By similarity). Interacts with SETD5 (By similarity).</text>
</comment>
<comment type="subcellular location">
    <subcellularLocation>
        <location evidence="1">Nucleus</location>
    </subcellularLocation>
</comment>
<comment type="similarity">
    <text evidence="5">Belongs to the LEO1 family.</text>
</comment>
<proteinExistence type="evidence at protein level"/>
<evidence type="ECO:0000250" key="1"/>
<evidence type="ECO:0000250" key="2">
    <source>
        <dbReference type="UniProtKB" id="Q5XJE5"/>
    </source>
</evidence>
<evidence type="ECO:0000250" key="3">
    <source>
        <dbReference type="UniProtKB" id="Q8WVC0"/>
    </source>
</evidence>
<evidence type="ECO:0000256" key="4">
    <source>
        <dbReference type="SAM" id="MobiDB-lite"/>
    </source>
</evidence>
<evidence type="ECO:0000305" key="5"/>
<evidence type="ECO:0007744" key="6">
    <source>
    </source>
</evidence>
<reference key="1">
    <citation type="journal article" date="2004" name="Genome Res.">
        <title>The status, quality, and expansion of the NIH full-length cDNA project: the Mammalian Gene Collection (MGC).</title>
        <authorList>
            <consortium name="The MGC Project Team"/>
        </authorList>
    </citation>
    <scope>NUCLEOTIDE SEQUENCE [LARGE SCALE MRNA]</scope>
    <source>
        <tissue>Testis</tissue>
    </source>
</reference>
<reference key="2">
    <citation type="journal article" date="2006" name="Proc. Natl. Acad. Sci. U.S.A.">
        <title>Quantitative phosphoproteomics of vasopressin-sensitive renal cells: regulation of aquaporin-2 phosphorylation at two sites.</title>
        <authorList>
            <person name="Hoffert J.D."/>
            <person name="Pisitkun T."/>
            <person name="Wang G."/>
            <person name="Shen R.-F."/>
            <person name="Knepper M.A."/>
        </authorList>
    </citation>
    <scope>IDENTIFICATION BY MASS SPECTROMETRY [LARGE SCALE ANALYSIS]</scope>
</reference>
<reference key="3">
    <citation type="journal article" date="2012" name="Nat. Commun.">
        <title>Quantitative maps of protein phosphorylation sites across 14 different rat organs and tissues.</title>
        <authorList>
            <person name="Lundby A."/>
            <person name="Secher A."/>
            <person name="Lage K."/>
            <person name="Nordsborg N.B."/>
            <person name="Dmytriyev A."/>
            <person name="Lundby C."/>
            <person name="Olsen J.V."/>
        </authorList>
    </citation>
    <scope>PHOSPHORYLATION [LARGE SCALE ANALYSIS] AT SER-10; SER-14; SER-161; SER-164; SER-173; SER-182; SER-190; THR-200; SER-209; SER-217; SER-224; SER-232; SER-241; SER-250; SER-258; SER-266; SER-306; SER-308; SER-312; SER-642 AND SER-670</scope>
    <scope>IDENTIFICATION BY MASS SPECTROMETRY [LARGE SCALE ANALYSIS]</scope>
</reference>
<feature type="initiator methionine" description="Removed" evidence="3">
    <location>
        <position position="1"/>
    </location>
</feature>
<feature type="chain" id="PRO_0000247822" description="RNA polymerase-associated protein LEO1">
    <location>
        <begin position="2"/>
        <end position="678"/>
    </location>
</feature>
<feature type="region of interest" description="Disordered" evidence="4">
    <location>
        <begin position="1"/>
        <end position="373"/>
    </location>
</feature>
<feature type="region of interest" description="Disordered" evidence="4">
    <location>
        <begin position="559"/>
        <end position="596"/>
    </location>
</feature>
<feature type="region of interest" description="Disordered" evidence="4">
    <location>
        <begin position="613"/>
        <end position="678"/>
    </location>
</feature>
<feature type="compositionally biased region" description="Acidic residues" evidence="4">
    <location>
        <begin position="1"/>
        <end position="14"/>
    </location>
</feature>
<feature type="compositionally biased region" description="Low complexity" evidence="4">
    <location>
        <begin position="32"/>
        <end position="43"/>
    </location>
</feature>
<feature type="compositionally biased region" description="Basic and acidic residues" evidence="4">
    <location>
        <begin position="70"/>
        <end position="97"/>
    </location>
</feature>
<feature type="compositionally biased region" description="Basic and acidic residues" evidence="4">
    <location>
        <begin position="105"/>
        <end position="114"/>
    </location>
</feature>
<feature type="compositionally biased region" description="Acidic residues" evidence="4">
    <location>
        <begin position="115"/>
        <end position="128"/>
    </location>
</feature>
<feature type="compositionally biased region" description="Basic and acidic residues" evidence="4">
    <location>
        <begin position="129"/>
        <end position="163"/>
    </location>
</feature>
<feature type="compositionally biased region" description="Acidic residues" evidence="4">
    <location>
        <begin position="164"/>
        <end position="178"/>
    </location>
</feature>
<feature type="compositionally biased region" description="Acidic residues" evidence="4">
    <location>
        <begin position="191"/>
        <end position="204"/>
    </location>
</feature>
<feature type="compositionally biased region" description="Basic and acidic residues" evidence="4">
    <location>
        <begin position="205"/>
        <end position="230"/>
    </location>
</feature>
<feature type="compositionally biased region" description="Basic and acidic residues" evidence="4">
    <location>
        <begin position="237"/>
        <end position="297"/>
    </location>
</feature>
<feature type="compositionally biased region" description="Low complexity" evidence="4">
    <location>
        <begin position="328"/>
        <end position="337"/>
    </location>
</feature>
<feature type="compositionally biased region" description="Basic and acidic residues" evidence="4">
    <location>
        <begin position="559"/>
        <end position="573"/>
    </location>
</feature>
<feature type="compositionally biased region" description="Acidic residues" evidence="4">
    <location>
        <begin position="586"/>
        <end position="595"/>
    </location>
</feature>
<feature type="compositionally biased region" description="Basic and acidic residues" evidence="4">
    <location>
        <begin position="648"/>
        <end position="660"/>
    </location>
</feature>
<feature type="modified residue" description="N-acetylalanine" evidence="3">
    <location>
        <position position="2"/>
    </location>
</feature>
<feature type="modified residue" description="Phosphoserine" evidence="6">
    <location>
        <position position="10"/>
    </location>
</feature>
<feature type="modified residue" description="Phosphoserine" evidence="6">
    <location>
        <position position="14"/>
    </location>
</feature>
<feature type="modified residue" description="Phosphoserine" evidence="3">
    <location>
        <position position="66"/>
    </location>
</feature>
<feature type="modified residue" description="Phosphoserine" evidence="6">
    <location>
        <position position="161"/>
    </location>
</feature>
<feature type="modified residue" description="Phosphoserine" evidence="6">
    <location>
        <position position="164"/>
    </location>
</feature>
<feature type="modified residue" description="Phosphoserine" evidence="6">
    <location>
        <position position="173"/>
    </location>
</feature>
<feature type="modified residue" description="Phosphoserine" evidence="6">
    <location>
        <position position="182"/>
    </location>
</feature>
<feature type="modified residue" description="Phosphoserine" evidence="6">
    <location>
        <position position="190"/>
    </location>
</feature>
<feature type="modified residue" description="Phosphothreonine" evidence="6">
    <location>
        <position position="200"/>
    </location>
</feature>
<feature type="modified residue" description="Phosphoserine" evidence="6">
    <location>
        <position position="209"/>
    </location>
</feature>
<feature type="modified residue" description="Phosphoserine" evidence="6">
    <location>
        <position position="217"/>
    </location>
</feature>
<feature type="modified residue" description="Phosphoserine" evidence="6">
    <location>
        <position position="224"/>
    </location>
</feature>
<feature type="modified residue" description="Phosphoserine" evidence="6">
    <location>
        <position position="232"/>
    </location>
</feature>
<feature type="modified residue" description="Phosphoserine" evidence="6">
    <location>
        <position position="241"/>
    </location>
</feature>
<feature type="modified residue" description="Phosphoserine" evidence="6">
    <location>
        <position position="250"/>
    </location>
</feature>
<feature type="modified residue" description="Phosphoserine" evidence="6">
    <location>
        <position position="258"/>
    </location>
</feature>
<feature type="modified residue" description="Phosphoserine" evidence="6">
    <location>
        <position position="266"/>
    </location>
</feature>
<feature type="modified residue" description="Phosphoserine" evidence="3">
    <location>
        <position position="289"/>
    </location>
</feature>
<feature type="modified residue" description="Phosphoserine" evidence="3">
    <location>
        <position position="291"/>
    </location>
</feature>
<feature type="modified residue" description="Phosphoserine" evidence="6">
    <location>
        <position position="306"/>
    </location>
</feature>
<feature type="modified residue" description="Phosphoserine" evidence="6">
    <location>
        <position position="308"/>
    </location>
</feature>
<feature type="modified residue" description="Phosphoserine" evidence="6">
    <location>
        <position position="312"/>
    </location>
</feature>
<feature type="modified residue" description="Phosphotyrosine" evidence="3">
    <location>
        <position position="618"/>
    </location>
</feature>
<feature type="modified residue" description="Phosphoserine" evidence="3">
    <location>
        <position position="619"/>
    </location>
</feature>
<feature type="modified residue" description="Phosphoserine" evidence="3">
    <location>
        <position position="620"/>
    </location>
</feature>
<feature type="modified residue" description="Phosphoserine" evidence="3">
    <location>
        <position position="622"/>
    </location>
</feature>
<feature type="modified residue" description="Phosphoserine" evidence="3">
    <location>
        <position position="626"/>
    </location>
</feature>
<feature type="modified residue" description="Phosphoserine" evidence="6">
    <location>
        <position position="642"/>
    </location>
</feature>
<feature type="modified residue" description="Phosphoserine" evidence="6">
    <location>
        <position position="670"/>
    </location>
</feature>
<gene>
    <name type="primary">Leo1</name>
</gene>
<accession>Q641X2</accession>
<organism>
    <name type="scientific">Rattus norvegicus</name>
    <name type="common">Rat</name>
    <dbReference type="NCBI Taxonomy" id="10116"/>
    <lineage>
        <taxon>Eukaryota</taxon>
        <taxon>Metazoa</taxon>
        <taxon>Chordata</taxon>
        <taxon>Craniata</taxon>
        <taxon>Vertebrata</taxon>
        <taxon>Euteleostomi</taxon>
        <taxon>Mammalia</taxon>
        <taxon>Eutheria</taxon>
        <taxon>Euarchontoglires</taxon>
        <taxon>Glires</taxon>
        <taxon>Rodentia</taxon>
        <taxon>Myomorpha</taxon>
        <taxon>Muroidea</taxon>
        <taxon>Muridae</taxon>
        <taxon>Murinae</taxon>
        <taxon>Rattus</taxon>
    </lineage>
</organism>
<sequence length="678" mass="76957">MADMEDLFGSEAESEAERKDSDSGSDSDSDQDNGASGSNASGSESDQDERGDSGQPSNKELFGDDSEEEGAPHHSGSDNHSEQSDNRSEASEERSDHEDNEPSDVDQHSGSEAHNDDDDDDDDEDDDDEGHRSDEGSHHSEAEGSEKAQSDDEKWDGEDKSDQSDDDEKLQNSDDEEREQGSDDEKLQNSADEEEKMQNTDDEDRAQLSDDDRQQLSEEEKGNSDDERPAASDNDEEKQNSDDEDRPQVSDEEKMQNSDDERPQVSDEDRRHSDDEEEQDQKSESARGSDSEDEVLRMKRKNAIPSDSEVDSDTEVPKDNNGTMDLFGGADDISSGSDGEDKPPTPGQPVDENGLPQDQQEEEPIPETRIEVEIPKVNTDLGNDLYFVKLPNFLSVEPRPFDPQYYEDEFEDEEMLDEEGRTRLKLKVENTIRWRMRRDEEGNEIKESNARIVKWSDGSMSLHLGNEVFDVYKAPLQGDHNHLFIRQGTGLQGQAVFKTKLTFRPHSTDSATHRKMTLSLADRCSKTQKIRILPMAGRDPECQRTEMIKKEEERLRASIRRESQQRRMREKQHQRGLSASYLEPDRYDEEEEGEESVSLAAIKNRYKGGIREERARIYSSDSDEGSEEDKAQRLLKAKKLNSDEEGESSGKRKAEDDDKANKKHKKYVISDEEEEEDD</sequence>